<name>TM38A_XENLA</name>
<protein>
    <recommendedName>
        <fullName>Trimeric intracellular cation channel type A</fullName>
        <shortName>TRIC-A</shortName>
        <shortName>TRICA</shortName>
    </recommendedName>
    <alternativeName>
        <fullName>Transmembrane protein 38A</fullName>
    </alternativeName>
</protein>
<reference key="1">
    <citation type="submission" date="2003-01" db="EMBL/GenBank/DDBJ databases">
        <authorList>
            <consortium name="NIH - Xenopus Gene Collection (XGC) project"/>
        </authorList>
    </citation>
    <scope>NUCLEOTIDE SEQUENCE [LARGE SCALE MRNA]</scope>
    <source>
        <tissue>Embryo</tissue>
    </source>
</reference>
<proteinExistence type="evidence at transcript level"/>
<organism>
    <name type="scientific">Xenopus laevis</name>
    <name type="common">African clawed frog</name>
    <dbReference type="NCBI Taxonomy" id="8355"/>
    <lineage>
        <taxon>Eukaryota</taxon>
        <taxon>Metazoa</taxon>
        <taxon>Chordata</taxon>
        <taxon>Craniata</taxon>
        <taxon>Vertebrata</taxon>
        <taxon>Euteleostomi</taxon>
        <taxon>Amphibia</taxon>
        <taxon>Batrachia</taxon>
        <taxon>Anura</taxon>
        <taxon>Pipoidea</taxon>
        <taxon>Pipidae</taxon>
        <taxon>Xenopodinae</taxon>
        <taxon>Xenopus</taxon>
        <taxon>Xenopus</taxon>
    </lineage>
</organism>
<sequence length="295" mass="33332">MELLSALSLDDLAASFSKLPVFPLFDVAYYIISILYLKYEPGAVDLSKRSPVASWLCAMLYCFGSYILADVLLGESPIHYFSNNANILLASAVWYLTFFCPLNIFYKIVSFLPVKLVLVGMKEVVRVRKIAMGIHHAHHHYHHGWVIMVLIGWVKGSGVALMSNLEQLLRGVWKPETNEILHMSFPTKASLYGAILFTLQQAHWLPISKAYLIFFFTLFMAVCKIYMTATHSHGSPFAIFESGICYVLFAAANGDHDDHGNHHHHHDDHDVSHSAGKSKEEHNEGTRKRKTKKAE</sequence>
<dbReference type="EMBL" id="BC044031">
    <property type="protein sequence ID" value="AAH44031.1"/>
    <property type="molecule type" value="mRNA"/>
</dbReference>
<dbReference type="RefSeq" id="NP_001079534.1">
    <property type="nucleotide sequence ID" value="NM_001086065.1"/>
</dbReference>
<dbReference type="SMR" id="Q7ZY07"/>
<dbReference type="DNASU" id="379221"/>
<dbReference type="GeneID" id="379221"/>
<dbReference type="KEGG" id="xla:379221"/>
<dbReference type="AGR" id="Xenbase:XB-GENE-5802954"/>
<dbReference type="CTD" id="379221"/>
<dbReference type="Xenbase" id="XB-GENE-5802954">
    <property type="gene designation" value="tmem38a.L"/>
</dbReference>
<dbReference type="OMA" id="FSKMAMF"/>
<dbReference type="OrthoDB" id="195817at2759"/>
<dbReference type="Proteomes" id="UP000186698">
    <property type="component" value="Chromosome 1L"/>
</dbReference>
<dbReference type="Bgee" id="379221">
    <property type="expression patterns" value="Expressed in muscle tissue and 8 other cell types or tissues"/>
</dbReference>
<dbReference type="GO" id="GO:0031965">
    <property type="term" value="C:nuclear membrane"/>
    <property type="evidence" value="ECO:0000250"/>
    <property type="project" value="UniProtKB"/>
</dbReference>
<dbReference type="GO" id="GO:0033017">
    <property type="term" value="C:sarcoplasmic reticulum membrane"/>
    <property type="evidence" value="ECO:0000250"/>
    <property type="project" value="UniProtKB"/>
</dbReference>
<dbReference type="GO" id="GO:0042802">
    <property type="term" value="F:identical protein binding"/>
    <property type="evidence" value="ECO:0007669"/>
    <property type="project" value="InterPro"/>
</dbReference>
<dbReference type="GO" id="GO:0046872">
    <property type="term" value="F:metal ion binding"/>
    <property type="evidence" value="ECO:0007669"/>
    <property type="project" value="UniProtKB-KW"/>
</dbReference>
<dbReference type="GO" id="GO:0005267">
    <property type="term" value="F:potassium channel activity"/>
    <property type="evidence" value="ECO:0000250"/>
    <property type="project" value="UniProtKB"/>
</dbReference>
<dbReference type="GO" id="GO:0051279">
    <property type="term" value="P:regulation of release of sequestered calcium ion into cytosol"/>
    <property type="evidence" value="ECO:0000250"/>
    <property type="project" value="UniProtKB"/>
</dbReference>
<dbReference type="InterPro" id="IPR007866">
    <property type="entry name" value="TRIC_channel"/>
</dbReference>
<dbReference type="PANTHER" id="PTHR12454">
    <property type="entry name" value="TRIMERIC INTRACELLULAR CATION CHANNEL"/>
    <property type="match status" value="1"/>
</dbReference>
<dbReference type="PANTHER" id="PTHR12454:SF3">
    <property type="entry name" value="TRIMERIC INTRACELLULAR CATION CHANNEL TYPE A"/>
    <property type="match status" value="1"/>
</dbReference>
<dbReference type="Pfam" id="PF05197">
    <property type="entry name" value="TRIC"/>
    <property type="match status" value="1"/>
</dbReference>
<accession>Q7ZY07</accession>
<keyword id="KW-0106">Calcium</keyword>
<keyword id="KW-0407">Ion channel</keyword>
<keyword id="KW-0406">Ion transport</keyword>
<keyword id="KW-0472">Membrane</keyword>
<keyword id="KW-0479">Metal-binding</keyword>
<keyword id="KW-0539">Nucleus</keyword>
<keyword id="KW-0630">Potassium</keyword>
<keyword id="KW-0631">Potassium channel</keyword>
<keyword id="KW-0633">Potassium transport</keyword>
<keyword id="KW-1185">Reference proteome</keyword>
<keyword id="KW-0703">Sarcoplasmic reticulum</keyword>
<keyword id="KW-0812">Transmembrane</keyword>
<keyword id="KW-1133">Transmembrane helix</keyword>
<keyword id="KW-0813">Transport</keyword>
<feature type="chain" id="PRO_0000291521" description="Trimeric intracellular cation channel type A">
    <location>
        <begin position="1"/>
        <end position="295"/>
    </location>
</feature>
<feature type="topological domain" description="Lumenal" evidence="6">
    <location>
        <begin position="1"/>
        <end position="18"/>
    </location>
</feature>
<feature type="transmembrane region" description="Helical;Name=1" evidence="4">
    <location>
        <begin position="19"/>
        <end position="39"/>
    </location>
</feature>
<feature type="topological domain" description="Cytoplasmic" evidence="6">
    <location>
        <begin position="40"/>
        <end position="51"/>
    </location>
</feature>
<feature type="transmembrane region" description="Helical;Name=2" evidence="4">
    <location>
        <begin position="52"/>
        <end position="72"/>
    </location>
</feature>
<feature type="topological domain" description="Lumenal" evidence="6">
    <location>
        <begin position="73"/>
        <end position="84"/>
    </location>
</feature>
<feature type="transmembrane region" description="Helical;Name=3" evidence="4">
    <location>
        <begin position="85"/>
        <end position="105"/>
    </location>
</feature>
<feature type="topological domain" description="Cytoplasmic" evidence="6">
    <location>
        <begin position="106"/>
        <end position="144"/>
    </location>
</feature>
<feature type="transmembrane region" description="Helical;Name=4" evidence="4">
    <location>
        <begin position="145"/>
        <end position="165"/>
    </location>
</feature>
<feature type="topological domain" description="Lumenal" evidence="6">
    <location>
        <begin position="166"/>
        <end position="178"/>
    </location>
</feature>
<feature type="transmembrane region" description="Helical;Name=5" evidence="4">
    <location>
        <begin position="179"/>
        <end position="199"/>
    </location>
</feature>
<feature type="topological domain" description="Cytoplasmic" evidence="6">
    <location>
        <begin position="200"/>
        <end position="201"/>
    </location>
</feature>
<feature type="transmembrane region" description="Helical;Name=6" evidence="4">
    <location>
        <begin position="202"/>
        <end position="222"/>
    </location>
</feature>
<feature type="topological domain" description="Lumenal" evidence="6">
    <location>
        <begin position="223"/>
        <end position="233"/>
    </location>
</feature>
<feature type="transmembrane region" description="Helical;Name=7" evidence="4">
    <location>
        <begin position="234"/>
        <end position="254"/>
    </location>
</feature>
<feature type="topological domain" description="Cytoplasmic" evidence="6">
    <location>
        <begin position="255"/>
        <end position="295"/>
    </location>
</feature>
<feature type="region of interest" description="Disordered" evidence="5">
    <location>
        <begin position="258"/>
        <end position="295"/>
    </location>
</feature>
<feature type="compositionally biased region" description="Basic and acidic residues" evidence="5">
    <location>
        <begin position="267"/>
        <end position="286"/>
    </location>
</feature>
<feature type="binding site" evidence="2">
    <location>
        <position position="74"/>
    </location>
    <ligand>
        <name>Ca(2+)</name>
        <dbReference type="ChEBI" id="CHEBI:29108"/>
    </ligand>
</feature>
<feature type="binding site" evidence="3">
    <location>
        <position position="122"/>
    </location>
    <ligand>
        <name>a 1,2-diacyl-sn-glycero-3-phospho-(1D-myo-inositol-4,5-bisphosphate)</name>
        <dbReference type="ChEBI" id="CHEBI:58456"/>
    </ligand>
</feature>
<feature type="binding site" evidence="3">
    <location>
        <position position="126"/>
    </location>
    <ligand>
        <name>a 1,2-diacyl-sn-glycero-3-phospho-(1D-myo-inositol-4,5-bisphosphate)</name>
        <dbReference type="ChEBI" id="CHEBI:58456"/>
    </ligand>
</feature>
<comment type="function">
    <text evidence="1">Intracellular monovalent cation channel required for maintenance of rapid intracellular calcium release. Acts as a potassium counter-ion channel that functions in synchronization with calcium release from intracellular stores. Opened by a change of voltage within the sarcoplasmic reticulum lumen.</text>
</comment>
<comment type="catalytic activity">
    <reaction evidence="1">
        <text>K(+)(in) = K(+)(out)</text>
        <dbReference type="Rhea" id="RHEA:29463"/>
        <dbReference type="ChEBI" id="CHEBI:29103"/>
    </reaction>
</comment>
<comment type="activity regulation">
    <text evidence="1">Channel activity is activated by a change of voltage within the sarcoplasmic reticulum lumen and blocked by luminal high Ca(2+) levels.</text>
</comment>
<comment type="subunit">
    <text evidence="1">Homotrimer; conformation seems to be controled by binding to diacylglycerol (DAG).</text>
</comment>
<comment type="subcellular location">
    <subcellularLocation>
        <location evidence="1">Sarcoplasmic reticulum membrane</location>
        <topology evidence="1">Multi-pass membrane protein</topology>
    </subcellularLocation>
    <subcellularLocation>
        <location evidence="1">Nucleus membrane</location>
    </subcellularLocation>
</comment>
<comment type="similarity">
    <text evidence="6">Belongs to the TMEM38 family.</text>
</comment>
<gene>
    <name type="primary">tmem38a</name>
</gene>
<evidence type="ECO:0000250" key="1">
    <source>
        <dbReference type="UniProtKB" id="A5A6S6"/>
    </source>
</evidence>
<evidence type="ECO:0000250" key="2">
    <source>
        <dbReference type="UniProtKB" id="Q5ZK43"/>
    </source>
</evidence>
<evidence type="ECO:0000250" key="3">
    <source>
        <dbReference type="UniProtKB" id="Q9NA73"/>
    </source>
</evidence>
<evidence type="ECO:0000255" key="4"/>
<evidence type="ECO:0000256" key="5">
    <source>
        <dbReference type="SAM" id="MobiDB-lite"/>
    </source>
</evidence>
<evidence type="ECO:0000305" key="6"/>